<gene>
    <name evidence="1" type="primary">rpsT</name>
    <name type="ordered locus">Psyr_0707</name>
</gene>
<dbReference type="EMBL" id="CP000075">
    <property type="protein sequence ID" value="AAY35775.1"/>
    <property type="molecule type" value="Genomic_DNA"/>
</dbReference>
<dbReference type="RefSeq" id="WP_003344603.1">
    <property type="nucleotide sequence ID" value="NC_007005.1"/>
</dbReference>
<dbReference type="RefSeq" id="YP_233813.1">
    <property type="nucleotide sequence ID" value="NC_007005.1"/>
</dbReference>
<dbReference type="SMR" id="Q4ZYJ7"/>
<dbReference type="STRING" id="205918.Psyr_0707"/>
<dbReference type="GeneID" id="96217048"/>
<dbReference type="KEGG" id="psb:Psyr_0707"/>
<dbReference type="PATRIC" id="fig|205918.7.peg.733"/>
<dbReference type="eggNOG" id="COG0268">
    <property type="taxonomic scope" value="Bacteria"/>
</dbReference>
<dbReference type="HOGENOM" id="CLU_160655_4_0_6"/>
<dbReference type="OrthoDB" id="9807974at2"/>
<dbReference type="Proteomes" id="UP000000426">
    <property type="component" value="Chromosome"/>
</dbReference>
<dbReference type="GO" id="GO:0005829">
    <property type="term" value="C:cytosol"/>
    <property type="evidence" value="ECO:0007669"/>
    <property type="project" value="TreeGrafter"/>
</dbReference>
<dbReference type="GO" id="GO:0015935">
    <property type="term" value="C:small ribosomal subunit"/>
    <property type="evidence" value="ECO:0007669"/>
    <property type="project" value="TreeGrafter"/>
</dbReference>
<dbReference type="GO" id="GO:0070181">
    <property type="term" value="F:small ribosomal subunit rRNA binding"/>
    <property type="evidence" value="ECO:0007669"/>
    <property type="project" value="TreeGrafter"/>
</dbReference>
<dbReference type="GO" id="GO:0003735">
    <property type="term" value="F:structural constituent of ribosome"/>
    <property type="evidence" value="ECO:0007669"/>
    <property type="project" value="InterPro"/>
</dbReference>
<dbReference type="GO" id="GO:0006412">
    <property type="term" value="P:translation"/>
    <property type="evidence" value="ECO:0007669"/>
    <property type="project" value="UniProtKB-UniRule"/>
</dbReference>
<dbReference type="FunFam" id="1.20.58.110:FF:000001">
    <property type="entry name" value="30S ribosomal protein S20"/>
    <property type="match status" value="1"/>
</dbReference>
<dbReference type="Gene3D" id="1.20.58.110">
    <property type="entry name" value="Ribosomal protein S20"/>
    <property type="match status" value="1"/>
</dbReference>
<dbReference type="HAMAP" id="MF_00500">
    <property type="entry name" value="Ribosomal_bS20"/>
    <property type="match status" value="1"/>
</dbReference>
<dbReference type="InterPro" id="IPR002583">
    <property type="entry name" value="Ribosomal_bS20"/>
</dbReference>
<dbReference type="InterPro" id="IPR036510">
    <property type="entry name" value="Ribosomal_bS20_sf"/>
</dbReference>
<dbReference type="NCBIfam" id="TIGR00029">
    <property type="entry name" value="S20"/>
    <property type="match status" value="1"/>
</dbReference>
<dbReference type="PANTHER" id="PTHR33398">
    <property type="entry name" value="30S RIBOSOMAL PROTEIN S20"/>
    <property type="match status" value="1"/>
</dbReference>
<dbReference type="PANTHER" id="PTHR33398:SF1">
    <property type="entry name" value="SMALL RIBOSOMAL SUBUNIT PROTEIN BS20C"/>
    <property type="match status" value="1"/>
</dbReference>
<dbReference type="Pfam" id="PF01649">
    <property type="entry name" value="Ribosomal_S20p"/>
    <property type="match status" value="1"/>
</dbReference>
<dbReference type="SUPFAM" id="SSF46992">
    <property type="entry name" value="Ribosomal protein S20"/>
    <property type="match status" value="1"/>
</dbReference>
<evidence type="ECO:0000255" key="1">
    <source>
        <dbReference type="HAMAP-Rule" id="MF_00500"/>
    </source>
</evidence>
<evidence type="ECO:0000256" key="2">
    <source>
        <dbReference type="SAM" id="MobiDB-lite"/>
    </source>
</evidence>
<evidence type="ECO:0000305" key="3"/>
<protein>
    <recommendedName>
        <fullName evidence="1">Small ribosomal subunit protein bS20</fullName>
    </recommendedName>
    <alternativeName>
        <fullName evidence="3">30S ribosomal protein S20</fullName>
    </alternativeName>
</protein>
<sequence>MANTPSAKKRAKQAEKRRSHNASLRSMVRTYIKNVVKAIDAKDAEKAQAAYVLAVPVIDRMADKGIIHKNKAARHKGRLNGHIKALSLAAAA</sequence>
<name>RS20_PSEU2</name>
<organism>
    <name type="scientific">Pseudomonas syringae pv. syringae (strain B728a)</name>
    <dbReference type="NCBI Taxonomy" id="205918"/>
    <lineage>
        <taxon>Bacteria</taxon>
        <taxon>Pseudomonadati</taxon>
        <taxon>Pseudomonadota</taxon>
        <taxon>Gammaproteobacteria</taxon>
        <taxon>Pseudomonadales</taxon>
        <taxon>Pseudomonadaceae</taxon>
        <taxon>Pseudomonas</taxon>
        <taxon>Pseudomonas syringae</taxon>
    </lineage>
</organism>
<feature type="chain" id="PRO_0000224981" description="Small ribosomal subunit protein bS20">
    <location>
        <begin position="1"/>
        <end position="92"/>
    </location>
</feature>
<feature type="region of interest" description="Disordered" evidence="2">
    <location>
        <begin position="1"/>
        <end position="23"/>
    </location>
</feature>
<feature type="compositionally biased region" description="Basic residues" evidence="2">
    <location>
        <begin position="7"/>
        <end position="20"/>
    </location>
</feature>
<accession>Q4ZYJ7</accession>
<comment type="function">
    <text evidence="1">Binds directly to 16S ribosomal RNA.</text>
</comment>
<comment type="similarity">
    <text evidence="1">Belongs to the bacterial ribosomal protein bS20 family.</text>
</comment>
<proteinExistence type="inferred from homology"/>
<reference key="1">
    <citation type="journal article" date="2005" name="Proc. Natl. Acad. Sci. U.S.A.">
        <title>Comparison of the complete genome sequences of Pseudomonas syringae pv. syringae B728a and pv. tomato DC3000.</title>
        <authorList>
            <person name="Feil H."/>
            <person name="Feil W.S."/>
            <person name="Chain P."/>
            <person name="Larimer F."/>
            <person name="Dibartolo G."/>
            <person name="Copeland A."/>
            <person name="Lykidis A."/>
            <person name="Trong S."/>
            <person name="Nolan M."/>
            <person name="Goltsman E."/>
            <person name="Thiel J."/>
            <person name="Malfatti S."/>
            <person name="Loper J.E."/>
            <person name="Lapidus A."/>
            <person name="Detter J.C."/>
            <person name="Land M."/>
            <person name="Richardson P.M."/>
            <person name="Kyrpides N.C."/>
            <person name="Ivanova N."/>
            <person name="Lindow S.E."/>
        </authorList>
    </citation>
    <scope>NUCLEOTIDE SEQUENCE [LARGE SCALE GENOMIC DNA]</scope>
    <source>
        <strain>B728a</strain>
    </source>
</reference>
<keyword id="KW-0687">Ribonucleoprotein</keyword>
<keyword id="KW-0689">Ribosomal protein</keyword>
<keyword id="KW-0694">RNA-binding</keyword>
<keyword id="KW-0699">rRNA-binding</keyword>